<feature type="chain" id="PRO_0000182955" description="Deoxyuridine 5'-triphosphate nucleotidohydrolase">
    <location>
        <begin position="1"/>
        <end position="188"/>
    </location>
</feature>
<feature type="region of interest" description="Disordered" evidence="2">
    <location>
        <begin position="1"/>
        <end position="34"/>
    </location>
</feature>
<comment type="function">
    <text>This enzyme is involved in nucleotide metabolism: it produces dUMP, the immediate precursor of thymidine nucleotides and it decreases the intracellular concentration of dUTP so that uracil cannot be incorporated into DNA.</text>
</comment>
<comment type="catalytic activity">
    <reaction>
        <text>dUTP + H2O = dUMP + diphosphate + H(+)</text>
        <dbReference type="Rhea" id="RHEA:10248"/>
        <dbReference type="ChEBI" id="CHEBI:15377"/>
        <dbReference type="ChEBI" id="CHEBI:15378"/>
        <dbReference type="ChEBI" id="CHEBI:33019"/>
        <dbReference type="ChEBI" id="CHEBI:61555"/>
        <dbReference type="ChEBI" id="CHEBI:246422"/>
        <dbReference type="EC" id="3.6.1.23"/>
    </reaction>
</comment>
<comment type="cofactor">
    <cofactor evidence="1">
        <name>Mg(2+)</name>
        <dbReference type="ChEBI" id="CHEBI:18420"/>
    </cofactor>
</comment>
<comment type="similarity">
    <text evidence="3">Belongs to the dUTPase family.</text>
</comment>
<evidence type="ECO:0000250" key="1"/>
<evidence type="ECO:0000256" key="2">
    <source>
        <dbReference type="SAM" id="MobiDB-lite"/>
    </source>
</evidence>
<evidence type="ECO:0000305" key="3"/>
<accession>P28893</accession>
<proteinExistence type="inferred from homology"/>
<protein>
    <recommendedName>
        <fullName>Deoxyuridine 5'-triphosphate nucleotidohydrolase</fullName>
        <shortName>dUTPase</shortName>
        <ecNumber>3.6.1.23</ecNumber>
    </recommendedName>
    <alternativeName>
        <fullName>dUTP pyrophosphatase</fullName>
    </alternativeName>
</protein>
<name>DUT_ICHVA</name>
<organismHost>
    <name type="scientific">Ictaluridae</name>
    <name type="common">bullhead catfishes</name>
    <dbReference type="NCBI Taxonomy" id="7996"/>
</organismHost>
<reference key="1">
    <citation type="journal article" date="1992" name="Virology">
        <title>Channel catfish virus: a new type of herpesvirus.</title>
        <authorList>
            <person name="Davison A.J."/>
        </authorList>
    </citation>
    <scope>NUCLEOTIDE SEQUENCE [LARGE SCALE GENOMIC DNA]</scope>
</reference>
<keyword id="KW-0378">Hydrolase</keyword>
<keyword id="KW-0460">Magnesium</keyword>
<keyword id="KW-0479">Metal-binding</keyword>
<keyword id="KW-0546">Nucleotide metabolism</keyword>
<keyword id="KW-1185">Reference proteome</keyword>
<dbReference type="EC" id="3.6.1.23"/>
<dbReference type="EMBL" id="M75136">
    <property type="protein sequence ID" value="AAA88152.1"/>
    <property type="molecule type" value="Genomic_DNA"/>
</dbReference>
<dbReference type="PIR" id="E36791">
    <property type="entry name" value="WZBEI1"/>
</dbReference>
<dbReference type="SMR" id="P28893"/>
<dbReference type="KEGG" id="vg:1488441"/>
<dbReference type="Proteomes" id="UP000007643">
    <property type="component" value="Segment"/>
</dbReference>
<dbReference type="GO" id="GO:0004170">
    <property type="term" value="F:dUTP diphosphatase activity"/>
    <property type="evidence" value="ECO:0007669"/>
    <property type="project" value="UniProtKB-EC"/>
</dbReference>
<dbReference type="GO" id="GO:0000287">
    <property type="term" value="F:magnesium ion binding"/>
    <property type="evidence" value="ECO:0007669"/>
    <property type="project" value="InterPro"/>
</dbReference>
<dbReference type="GO" id="GO:0006226">
    <property type="term" value="P:dUMP biosynthetic process"/>
    <property type="evidence" value="ECO:0007669"/>
    <property type="project" value="InterPro"/>
</dbReference>
<dbReference type="GO" id="GO:0046081">
    <property type="term" value="P:dUTP catabolic process"/>
    <property type="evidence" value="ECO:0007669"/>
    <property type="project" value="InterPro"/>
</dbReference>
<dbReference type="CDD" id="cd07557">
    <property type="entry name" value="trimeric_dUTPase"/>
    <property type="match status" value="1"/>
</dbReference>
<dbReference type="Gene3D" id="2.70.40.10">
    <property type="match status" value="1"/>
</dbReference>
<dbReference type="InterPro" id="IPR008181">
    <property type="entry name" value="dUTPase"/>
</dbReference>
<dbReference type="InterPro" id="IPR029054">
    <property type="entry name" value="dUTPase-like"/>
</dbReference>
<dbReference type="InterPro" id="IPR036157">
    <property type="entry name" value="dUTPase-like_sf"/>
</dbReference>
<dbReference type="InterPro" id="IPR033704">
    <property type="entry name" value="dUTPase_trimeric"/>
</dbReference>
<dbReference type="NCBIfam" id="TIGR00576">
    <property type="entry name" value="dut"/>
    <property type="match status" value="1"/>
</dbReference>
<dbReference type="PANTHER" id="PTHR11241">
    <property type="entry name" value="DEOXYURIDINE 5'-TRIPHOSPHATE NUCLEOTIDOHYDROLASE"/>
    <property type="match status" value="1"/>
</dbReference>
<dbReference type="PANTHER" id="PTHR11241:SF0">
    <property type="entry name" value="DEOXYURIDINE 5'-TRIPHOSPHATE NUCLEOTIDOHYDROLASE"/>
    <property type="match status" value="1"/>
</dbReference>
<dbReference type="Pfam" id="PF00692">
    <property type="entry name" value="dUTPase"/>
    <property type="match status" value="1"/>
</dbReference>
<dbReference type="SUPFAM" id="SSF51283">
    <property type="entry name" value="dUTPase-like"/>
    <property type="match status" value="1"/>
</dbReference>
<organism>
    <name type="scientific">Ictalurid herpesvirus 1 (strain Auburn)</name>
    <name type="common">IcHV-1</name>
    <name type="synonym">Channel catfish herpesvirus</name>
    <dbReference type="NCBI Taxonomy" id="766178"/>
    <lineage>
        <taxon>Viruses</taxon>
        <taxon>Duplodnaviria</taxon>
        <taxon>Heunggongvirae</taxon>
        <taxon>Peploviricota</taxon>
        <taxon>Herviviricetes</taxon>
        <taxon>Herpesvirales</taxon>
        <taxon>Alloherpesviridae</taxon>
        <taxon>Ictavirus</taxon>
        <taxon>Ictavirus ictaluridallo1</taxon>
        <taxon>Ictalurid herpesvirus 1</taxon>
    </lineage>
</organism>
<sequence>MGEMTSGVDGHGSTKRTTSEAQKMDFNTDRGSAIPTGDDRGYQCGVIGDSVRFSVFTGYDAADVSIPKISSPGSAGFDLSVLEDREFIRGCHYRLPTGLAIAVPRGYVGIITPRSSQAKNFVSTGIIDSDFRGHIHIMVSAIADFSVKKNQRIAQLVVTPCLTQSEVVPYETLERTRRGTGGFGSSGQ</sequence>
<gene>
    <name type="primary">49</name>
</gene>